<protein>
    <recommendedName>
        <fullName evidence="1">Octanoyltransferase</fullName>
        <ecNumber evidence="1">2.3.1.181</ecNumber>
    </recommendedName>
    <alternativeName>
        <fullName evidence="1">Lipoate-protein ligase B</fullName>
    </alternativeName>
    <alternativeName>
        <fullName evidence="1">Lipoyl/octanoyl transferase</fullName>
    </alternativeName>
    <alternativeName>
        <fullName evidence="1">Octanoyl-[acyl-carrier-protein]-protein N-octanoyltransferase</fullName>
    </alternativeName>
</protein>
<reference key="1">
    <citation type="submission" date="2006-06" db="EMBL/GenBank/DDBJ databases">
        <title>Complete sequence of Pseudoalteromonas atlantica T6c.</title>
        <authorList>
            <consortium name="US DOE Joint Genome Institute"/>
            <person name="Copeland A."/>
            <person name="Lucas S."/>
            <person name="Lapidus A."/>
            <person name="Barry K."/>
            <person name="Detter J.C."/>
            <person name="Glavina del Rio T."/>
            <person name="Hammon N."/>
            <person name="Israni S."/>
            <person name="Dalin E."/>
            <person name="Tice H."/>
            <person name="Pitluck S."/>
            <person name="Saunders E."/>
            <person name="Brettin T."/>
            <person name="Bruce D."/>
            <person name="Han C."/>
            <person name="Tapia R."/>
            <person name="Gilna P."/>
            <person name="Schmutz J."/>
            <person name="Larimer F."/>
            <person name="Land M."/>
            <person name="Hauser L."/>
            <person name="Kyrpides N."/>
            <person name="Kim E."/>
            <person name="Karls A.C."/>
            <person name="Bartlett D."/>
            <person name="Higgins B.P."/>
            <person name="Richardson P."/>
        </authorList>
    </citation>
    <scope>NUCLEOTIDE SEQUENCE [LARGE SCALE GENOMIC DNA]</scope>
    <source>
        <strain>T6c / ATCC BAA-1087</strain>
    </source>
</reference>
<feature type="chain" id="PRO_0000321659" description="Octanoyltransferase">
    <location>
        <begin position="1"/>
        <end position="217"/>
    </location>
</feature>
<feature type="domain" description="BPL/LPL catalytic" evidence="2">
    <location>
        <begin position="33"/>
        <end position="208"/>
    </location>
</feature>
<feature type="active site" description="Acyl-thioester intermediate" evidence="1">
    <location>
        <position position="170"/>
    </location>
</feature>
<feature type="binding site" evidence="1">
    <location>
        <begin position="72"/>
        <end position="79"/>
    </location>
    <ligand>
        <name>substrate</name>
    </ligand>
</feature>
<feature type="binding site" evidence="1">
    <location>
        <begin position="139"/>
        <end position="141"/>
    </location>
    <ligand>
        <name>substrate</name>
    </ligand>
</feature>
<feature type="binding site" evidence="1">
    <location>
        <begin position="152"/>
        <end position="154"/>
    </location>
    <ligand>
        <name>substrate</name>
    </ligand>
</feature>
<feature type="site" description="Lowers pKa of active site Cys" evidence="1">
    <location>
        <position position="136"/>
    </location>
</feature>
<accession>Q15VL2</accession>
<keyword id="KW-0012">Acyltransferase</keyword>
<keyword id="KW-0963">Cytoplasm</keyword>
<keyword id="KW-0808">Transferase</keyword>
<name>LIPB_PSEA6</name>
<comment type="function">
    <text evidence="1">Catalyzes the transfer of endogenously produced octanoic acid from octanoyl-acyl-carrier-protein onto the lipoyl domains of lipoate-dependent enzymes. Lipoyl-ACP can also act as a substrate although octanoyl-ACP is likely to be the physiological substrate.</text>
</comment>
<comment type="catalytic activity">
    <reaction evidence="1">
        <text>octanoyl-[ACP] + L-lysyl-[protein] = N(6)-octanoyl-L-lysyl-[protein] + holo-[ACP] + H(+)</text>
        <dbReference type="Rhea" id="RHEA:17665"/>
        <dbReference type="Rhea" id="RHEA-COMP:9636"/>
        <dbReference type="Rhea" id="RHEA-COMP:9685"/>
        <dbReference type="Rhea" id="RHEA-COMP:9752"/>
        <dbReference type="Rhea" id="RHEA-COMP:9928"/>
        <dbReference type="ChEBI" id="CHEBI:15378"/>
        <dbReference type="ChEBI" id="CHEBI:29969"/>
        <dbReference type="ChEBI" id="CHEBI:64479"/>
        <dbReference type="ChEBI" id="CHEBI:78463"/>
        <dbReference type="ChEBI" id="CHEBI:78809"/>
        <dbReference type="EC" id="2.3.1.181"/>
    </reaction>
</comment>
<comment type="pathway">
    <text evidence="1">Protein modification; protein lipoylation via endogenous pathway; protein N(6)-(lipoyl)lysine from octanoyl-[acyl-carrier-protein]: step 1/2.</text>
</comment>
<comment type="subcellular location">
    <subcellularLocation>
        <location evidence="1">Cytoplasm</location>
    </subcellularLocation>
</comment>
<comment type="miscellaneous">
    <text evidence="1">In the reaction, the free carboxyl group of octanoic acid is attached via an amide linkage to the epsilon-amino group of a specific lysine residue of lipoyl domains of lipoate-dependent enzymes.</text>
</comment>
<comment type="similarity">
    <text evidence="1">Belongs to the LipB family.</text>
</comment>
<evidence type="ECO:0000255" key="1">
    <source>
        <dbReference type="HAMAP-Rule" id="MF_00013"/>
    </source>
</evidence>
<evidence type="ECO:0000255" key="2">
    <source>
        <dbReference type="PROSITE-ProRule" id="PRU01067"/>
    </source>
</evidence>
<dbReference type="EC" id="2.3.1.181" evidence="1"/>
<dbReference type="EMBL" id="CP000388">
    <property type="protein sequence ID" value="ABG40076.1"/>
    <property type="molecule type" value="Genomic_DNA"/>
</dbReference>
<dbReference type="RefSeq" id="WP_011574391.1">
    <property type="nucleotide sequence ID" value="NC_008228.1"/>
</dbReference>
<dbReference type="SMR" id="Q15VL2"/>
<dbReference type="STRING" id="342610.Patl_1554"/>
<dbReference type="KEGG" id="pat:Patl_1554"/>
<dbReference type="eggNOG" id="COG0321">
    <property type="taxonomic scope" value="Bacteria"/>
</dbReference>
<dbReference type="HOGENOM" id="CLU_035168_3_1_6"/>
<dbReference type="OrthoDB" id="9787061at2"/>
<dbReference type="UniPathway" id="UPA00538">
    <property type="reaction ID" value="UER00592"/>
</dbReference>
<dbReference type="Proteomes" id="UP000001981">
    <property type="component" value="Chromosome"/>
</dbReference>
<dbReference type="GO" id="GO:0005737">
    <property type="term" value="C:cytoplasm"/>
    <property type="evidence" value="ECO:0007669"/>
    <property type="project" value="UniProtKB-SubCell"/>
</dbReference>
<dbReference type="GO" id="GO:0033819">
    <property type="term" value="F:lipoyl(octanoyl) transferase activity"/>
    <property type="evidence" value="ECO:0007669"/>
    <property type="project" value="UniProtKB-EC"/>
</dbReference>
<dbReference type="GO" id="GO:0036211">
    <property type="term" value="P:protein modification process"/>
    <property type="evidence" value="ECO:0007669"/>
    <property type="project" value="InterPro"/>
</dbReference>
<dbReference type="CDD" id="cd16444">
    <property type="entry name" value="LipB"/>
    <property type="match status" value="1"/>
</dbReference>
<dbReference type="FunFam" id="3.30.930.10:FF:000020">
    <property type="entry name" value="Octanoyltransferase"/>
    <property type="match status" value="1"/>
</dbReference>
<dbReference type="Gene3D" id="3.30.930.10">
    <property type="entry name" value="Bira Bifunctional Protein, Domain 2"/>
    <property type="match status" value="1"/>
</dbReference>
<dbReference type="HAMAP" id="MF_00013">
    <property type="entry name" value="LipB"/>
    <property type="match status" value="1"/>
</dbReference>
<dbReference type="InterPro" id="IPR045864">
    <property type="entry name" value="aa-tRNA-synth_II/BPL/LPL"/>
</dbReference>
<dbReference type="InterPro" id="IPR004143">
    <property type="entry name" value="BPL_LPL_catalytic"/>
</dbReference>
<dbReference type="InterPro" id="IPR000544">
    <property type="entry name" value="Octanoyltransferase"/>
</dbReference>
<dbReference type="InterPro" id="IPR020605">
    <property type="entry name" value="Octanoyltransferase_CS"/>
</dbReference>
<dbReference type="NCBIfam" id="TIGR00214">
    <property type="entry name" value="lipB"/>
    <property type="match status" value="1"/>
</dbReference>
<dbReference type="NCBIfam" id="NF010922">
    <property type="entry name" value="PRK14342.1"/>
    <property type="match status" value="1"/>
</dbReference>
<dbReference type="PANTHER" id="PTHR10993:SF7">
    <property type="entry name" value="LIPOYLTRANSFERASE 2, MITOCHONDRIAL-RELATED"/>
    <property type="match status" value="1"/>
</dbReference>
<dbReference type="PANTHER" id="PTHR10993">
    <property type="entry name" value="OCTANOYLTRANSFERASE"/>
    <property type="match status" value="1"/>
</dbReference>
<dbReference type="Pfam" id="PF21948">
    <property type="entry name" value="LplA-B_cat"/>
    <property type="match status" value="1"/>
</dbReference>
<dbReference type="PIRSF" id="PIRSF016262">
    <property type="entry name" value="LPLase"/>
    <property type="match status" value="1"/>
</dbReference>
<dbReference type="SUPFAM" id="SSF55681">
    <property type="entry name" value="Class II aaRS and biotin synthetases"/>
    <property type="match status" value="1"/>
</dbReference>
<dbReference type="PROSITE" id="PS51733">
    <property type="entry name" value="BPL_LPL_CATALYTIC"/>
    <property type="match status" value="1"/>
</dbReference>
<dbReference type="PROSITE" id="PS01313">
    <property type="entry name" value="LIPB"/>
    <property type="match status" value="1"/>
</dbReference>
<proteinExistence type="inferred from homology"/>
<gene>
    <name evidence="1" type="primary">lipB</name>
    <name type="ordered locus">Patl_1554</name>
</gene>
<organism>
    <name type="scientific">Pseudoalteromonas atlantica (strain T6c / ATCC BAA-1087)</name>
    <dbReference type="NCBI Taxonomy" id="3042615"/>
    <lineage>
        <taxon>Bacteria</taxon>
        <taxon>Pseudomonadati</taxon>
        <taxon>Pseudomonadota</taxon>
        <taxon>Gammaproteobacteria</taxon>
        <taxon>Alteromonadales</taxon>
        <taxon>Alteromonadaceae</taxon>
        <taxon>Paraglaciecola</taxon>
    </lineage>
</organism>
<sequence length="217" mass="23721">MNDTTPVIIRQLGRQAYFPIWQAMQDFTDSRDSSSQDEIWLVEHDPVFTQGQAGKEEHLLAPGDIPVVKVDRGGQVTYHGPGQQMMYVLLNLKRHGLGVRTLVSALESCIVDTLKEYKVDAYPKADAPGVYVDNKKVCSIGLRIRRGCSFHGLALNVNMDLAPFQRINPCGYAGLEMVDCTQLGGPDSLAVAGPAIAEKLCSLLGIASVENKEGFDE</sequence>